<accession>Q9HKM6</accession>
<protein>
    <recommendedName>
        <fullName>Glutamate-1-semialdehyde 2,1-aminomutase</fullName>
        <shortName>GSA</shortName>
        <ecNumber>5.4.3.8</ecNumber>
    </recommendedName>
    <alternativeName>
        <fullName>Glutamate-1-semialdehyde aminotransferase</fullName>
        <shortName>GSA-AT</shortName>
    </alternativeName>
</protein>
<keyword id="KW-0963">Cytoplasm</keyword>
<keyword id="KW-0413">Isomerase</keyword>
<keyword id="KW-0627">Porphyrin biosynthesis</keyword>
<keyword id="KW-0663">Pyridoxal phosphate</keyword>
<keyword id="KW-1185">Reference proteome</keyword>
<reference key="1">
    <citation type="journal article" date="2000" name="Nature">
        <title>The genome sequence of the thermoacidophilic scavenger Thermoplasma acidophilum.</title>
        <authorList>
            <person name="Ruepp A."/>
            <person name="Graml W."/>
            <person name="Santos-Martinez M.-L."/>
            <person name="Koretke K.K."/>
            <person name="Volker C."/>
            <person name="Mewes H.-W."/>
            <person name="Frishman D."/>
            <person name="Stocker S."/>
            <person name="Lupas A.N."/>
            <person name="Baumeister W."/>
        </authorList>
    </citation>
    <scope>NUCLEOTIDE SEQUENCE [LARGE SCALE GENOMIC DNA]</scope>
    <source>
        <strain>ATCC 25905 / DSM 1728 / JCM 9062 / NBRC 15155 / AMRC-C165</strain>
    </source>
</reference>
<proteinExistence type="inferred from homology"/>
<gene>
    <name type="primary">hemL</name>
    <name type="ordered locus">Ta0571</name>
</gene>
<feature type="chain" id="PRO_0000120492" description="Glutamate-1-semialdehyde 2,1-aminomutase">
    <location>
        <begin position="1"/>
        <end position="421"/>
    </location>
</feature>
<feature type="modified residue" description="N6-(pyridoxal phosphate)lysine" evidence="1">
    <location>
        <position position="261"/>
    </location>
</feature>
<evidence type="ECO:0000250" key="1"/>
<evidence type="ECO:0000305" key="2"/>
<dbReference type="EC" id="5.4.3.8"/>
<dbReference type="EMBL" id="AL445064">
    <property type="protein sequence ID" value="CAC11711.1"/>
    <property type="status" value="ALT_INIT"/>
    <property type="molecule type" value="Genomic_DNA"/>
</dbReference>
<dbReference type="RefSeq" id="WP_048161655.1">
    <property type="nucleotide sequence ID" value="NC_002578.1"/>
</dbReference>
<dbReference type="SMR" id="Q9HKM6"/>
<dbReference type="FunCoup" id="Q9HKM6">
    <property type="interactions" value="103"/>
</dbReference>
<dbReference type="STRING" id="273075.gene:9571791"/>
<dbReference type="PaxDb" id="273075-Ta0571"/>
<dbReference type="EnsemblBacteria" id="CAC11711">
    <property type="protein sequence ID" value="CAC11711"/>
    <property type="gene ID" value="CAC11711"/>
</dbReference>
<dbReference type="KEGG" id="tac:Ta0571"/>
<dbReference type="eggNOG" id="arCOG00918">
    <property type="taxonomic scope" value="Archaea"/>
</dbReference>
<dbReference type="HOGENOM" id="CLU_016922_1_5_2"/>
<dbReference type="InParanoid" id="Q9HKM6"/>
<dbReference type="OrthoDB" id="6524at2157"/>
<dbReference type="UniPathway" id="UPA00251">
    <property type="reaction ID" value="UER00317"/>
</dbReference>
<dbReference type="Proteomes" id="UP000001024">
    <property type="component" value="Chromosome"/>
</dbReference>
<dbReference type="GO" id="GO:0005737">
    <property type="term" value="C:cytoplasm"/>
    <property type="evidence" value="ECO:0007669"/>
    <property type="project" value="UniProtKB-SubCell"/>
</dbReference>
<dbReference type="GO" id="GO:0042286">
    <property type="term" value="F:glutamate-1-semialdehyde 2,1-aminomutase activity"/>
    <property type="evidence" value="ECO:0007669"/>
    <property type="project" value="UniProtKB-UniRule"/>
</dbReference>
<dbReference type="GO" id="GO:0030170">
    <property type="term" value="F:pyridoxal phosphate binding"/>
    <property type="evidence" value="ECO:0007669"/>
    <property type="project" value="InterPro"/>
</dbReference>
<dbReference type="GO" id="GO:0008483">
    <property type="term" value="F:transaminase activity"/>
    <property type="evidence" value="ECO:0007669"/>
    <property type="project" value="InterPro"/>
</dbReference>
<dbReference type="GO" id="GO:0006782">
    <property type="term" value="P:protoporphyrinogen IX biosynthetic process"/>
    <property type="evidence" value="ECO:0007669"/>
    <property type="project" value="UniProtKB-UniRule"/>
</dbReference>
<dbReference type="CDD" id="cd00610">
    <property type="entry name" value="OAT_like"/>
    <property type="match status" value="1"/>
</dbReference>
<dbReference type="FunFam" id="3.40.640.10:FF:000021">
    <property type="entry name" value="Glutamate-1-semialdehyde 2,1-aminomutase"/>
    <property type="match status" value="1"/>
</dbReference>
<dbReference type="Gene3D" id="3.90.1150.10">
    <property type="entry name" value="Aspartate Aminotransferase, domain 1"/>
    <property type="match status" value="1"/>
</dbReference>
<dbReference type="Gene3D" id="3.40.640.10">
    <property type="entry name" value="Type I PLP-dependent aspartate aminotransferase-like (Major domain)"/>
    <property type="match status" value="1"/>
</dbReference>
<dbReference type="HAMAP" id="MF_00375">
    <property type="entry name" value="HemL_aminotrans_3"/>
    <property type="match status" value="1"/>
</dbReference>
<dbReference type="InterPro" id="IPR004639">
    <property type="entry name" value="4pyrrol_synth_GluAld_NH2Trfase"/>
</dbReference>
<dbReference type="InterPro" id="IPR005814">
    <property type="entry name" value="Aminotrans_3"/>
</dbReference>
<dbReference type="InterPro" id="IPR049704">
    <property type="entry name" value="Aminotrans_3_PPA_site"/>
</dbReference>
<dbReference type="InterPro" id="IPR015424">
    <property type="entry name" value="PyrdxlP-dep_Trfase"/>
</dbReference>
<dbReference type="InterPro" id="IPR015421">
    <property type="entry name" value="PyrdxlP-dep_Trfase_major"/>
</dbReference>
<dbReference type="InterPro" id="IPR015422">
    <property type="entry name" value="PyrdxlP-dep_Trfase_small"/>
</dbReference>
<dbReference type="NCBIfam" id="TIGR00713">
    <property type="entry name" value="hemL"/>
    <property type="match status" value="1"/>
</dbReference>
<dbReference type="NCBIfam" id="NF000818">
    <property type="entry name" value="PRK00062.1"/>
    <property type="match status" value="1"/>
</dbReference>
<dbReference type="PANTHER" id="PTHR43713">
    <property type="entry name" value="GLUTAMATE-1-SEMIALDEHYDE 2,1-AMINOMUTASE"/>
    <property type="match status" value="1"/>
</dbReference>
<dbReference type="PANTHER" id="PTHR43713:SF3">
    <property type="entry name" value="GLUTAMATE-1-SEMIALDEHYDE 2,1-AMINOMUTASE 1, CHLOROPLASTIC-RELATED"/>
    <property type="match status" value="1"/>
</dbReference>
<dbReference type="Pfam" id="PF00202">
    <property type="entry name" value="Aminotran_3"/>
    <property type="match status" value="1"/>
</dbReference>
<dbReference type="SUPFAM" id="SSF53383">
    <property type="entry name" value="PLP-dependent transferases"/>
    <property type="match status" value="1"/>
</dbReference>
<dbReference type="PROSITE" id="PS00600">
    <property type="entry name" value="AA_TRANSFER_CLASS_3"/>
    <property type="match status" value="1"/>
</dbReference>
<organism>
    <name type="scientific">Thermoplasma acidophilum (strain ATCC 25905 / DSM 1728 / JCM 9062 / NBRC 15155 / AMRC-C165)</name>
    <dbReference type="NCBI Taxonomy" id="273075"/>
    <lineage>
        <taxon>Archaea</taxon>
        <taxon>Methanobacteriati</taxon>
        <taxon>Thermoplasmatota</taxon>
        <taxon>Thermoplasmata</taxon>
        <taxon>Thermoplasmatales</taxon>
        <taxon>Thermoplasmataceae</taxon>
        <taxon>Thermoplasma</taxon>
    </lineage>
</organism>
<name>GSA_THEAC</name>
<sequence length="421" mass="46430">MGSKDLFQRGSSLFPMGVNSPVRYFKDYPFYVDNASGSRIYDVDGNEYIDYCLAYGPSILGHADPDVVRAVRDQAEKGLIYGAPSEAEIRLGDIIRRSSKNIEMMRFTNSGTEATMHAIRLARAYTGRSIIVKMEGGFHGAHDYSLIRSGSGTLTFGSPSSPGVPEEVARTVVVGRYNDEANIRNIFSQYGSRIAAVITEPIMGNAGVITPEPGFLEFLRDITQKNGSLLIFDEVITGYRFAFSPYQDIIGIRPDLTTMGKIIGGGMPIGLFGGSADIMKKVSPSGDVYQSGTFSGNPVTMAAGFAALKKLQGMDYASLVRRTEKLMNGIDDILAKRKIRHVVNGYRSMFQFFFAESAKNYDEVMKADRDLYFRIFKRLMNHGVYVPPSQFETNFVSFAHSDDDISKTIEAFDLSVGEAAK</sequence>
<comment type="catalytic activity">
    <reaction>
        <text>(S)-4-amino-5-oxopentanoate = 5-aminolevulinate</text>
        <dbReference type="Rhea" id="RHEA:14265"/>
        <dbReference type="ChEBI" id="CHEBI:57501"/>
        <dbReference type="ChEBI" id="CHEBI:356416"/>
        <dbReference type="EC" id="5.4.3.8"/>
    </reaction>
</comment>
<comment type="cofactor">
    <cofactor evidence="1">
        <name>pyridoxal 5'-phosphate</name>
        <dbReference type="ChEBI" id="CHEBI:597326"/>
    </cofactor>
</comment>
<comment type="pathway">
    <text>Porphyrin-containing compound metabolism; protoporphyrin-IX biosynthesis; 5-aminolevulinate from L-glutamyl-tRNA(Glu): step 2/2.</text>
</comment>
<comment type="subcellular location">
    <subcellularLocation>
        <location evidence="2">Cytoplasm</location>
    </subcellularLocation>
</comment>
<comment type="similarity">
    <text evidence="2">Belongs to the class-III pyridoxal-phosphate-dependent aminotransferase family. HemL subfamily.</text>
</comment>
<comment type="sequence caution" evidence="2">
    <conflict type="erroneous initiation">
        <sequence resource="EMBL-CDS" id="CAC11711"/>
    </conflict>
</comment>